<organism>
    <name type="scientific">Human bocavirus 3</name>
    <name type="common">HBoV3</name>
    <name type="synonym">Adelavirus W471</name>
    <dbReference type="NCBI Taxonomy" id="638313"/>
    <lineage>
        <taxon>Viruses</taxon>
        <taxon>Monodnaviria</taxon>
        <taxon>Shotokuvirae</taxon>
        <taxon>Cossaviricota</taxon>
        <taxon>Quintoviricetes</taxon>
        <taxon>Piccovirales</taxon>
        <taxon>Parvoviridae</taxon>
        <taxon>Parvovirinae</taxon>
        <taxon>Bocaparvovirus</taxon>
        <taxon>Bocaparvovirus primate1</taxon>
    </lineage>
</organism>
<evidence type="ECO:0000250" key="1">
    <source>
        <dbReference type="UniProtKB" id="Q3YPH5"/>
    </source>
</evidence>
<evidence type="ECO:0000256" key="2">
    <source>
        <dbReference type="SAM" id="MobiDB-lite"/>
    </source>
</evidence>
<evidence type="ECO:0000305" key="3"/>
<name>NP1_HBOC3</name>
<feature type="chain" id="PRO_0000445639" description="Non-structural protein NP-1">
    <location>
        <begin position="1"/>
        <end position="218"/>
    </location>
</feature>
<feature type="region of interest" description="Disordered" evidence="2">
    <location>
        <begin position="1"/>
        <end position="89"/>
    </location>
</feature>
<feature type="region of interest" description="Disordered" evidence="2">
    <location>
        <begin position="195"/>
        <end position="218"/>
    </location>
</feature>
<feature type="compositionally biased region" description="Basic residues" evidence="2">
    <location>
        <begin position="8"/>
        <end position="18"/>
    </location>
</feature>
<feature type="compositionally biased region" description="Basic residues" evidence="2">
    <location>
        <begin position="27"/>
        <end position="40"/>
    </location>
</feature>
<feature type="compositionally biased region" description="Polar residues" evidence="2">
    <location>
        <begin position="58"/>
        <end position="67"/>
    </location>
</feature>
<feature type="compositionally biased region" description="Basic and acidic residues" evidence="2">
    <location>
        <begin position="73"/>
        <end position="86"/>
    </location>
</feature>
<feature type="compositionally biased region" description="Acidic residues" evidence="2">
    <location>
        <begin position="196"/>
        <end position="205"/>
    </location>
</feature>
<dbReference type="EMBL" id="EU918736">
    <property type="protein sequence ID" value="ACH81928.1"/>
    <property type="molecule type" value="Genomic_DNA"/>
</dbReference>
<dbReference type="RefSeq" id="YP_002808455.1">
    <property type="nucleotide sequence ID" value="NC_012564.1"/>
</dbReference>
<dbReference type="KEGG" id="vg:7768237"/>
<dbReference type="OrthoDB" id="10942at10239"/>
<dbReference type="Proteomes" id="UP000128541">
    <property type="component" value="Genome"/>
</dbReference>
<dbReference type="GO" id="GO:0042025">
    <property type="term" value="C:host cell nucleus"/>
    <property type="evidence" value="ECO:0007669"/>
    <property type="project" value="UniProtKB-SubCell"/>
</dbReference>
<dbReference type="InterPro" id="IPR021075">
    <property type="entry name" value="Bocavirus_NP1"/>
</dbReference>
<dbReference type="Pfam" id="PF11733">
    <property type="entry name" value="NP1-WLL"/>
    <property type="match status" value="1"/>
</dbReference>
<reference key="1">
    <citation type="journal article" date="2009" name="PLoS Pathog.">
        <title>A Novel Bocavirus Associated with Acute Gastroenteritis in Australian Children.</title>
        <authorList>
            <person name="Arthur J.L."/>
            <person name="Higgins G.D."/>
            <person name="Davidson G.P."/>
            <person name="Givney R.C."/>
            <person name="Ratcliff R.M."/>
        </authorList>
    </citation>
    <scope>NUCLEOTIDE SEQUENCE [LARGE SCALE GENOMIC DNA]</scope>
</reference>
<keyword id="KW-0010">Activator</keyword>
<keyword id="KW-1048">Host nucleus</keyword>
<keyword id="KW-0804">Transcription</keyword>
<keyword id="KW-0805">Transcription regulation</keyword>
<organismHost>
    <name type="scientific">Homo sapiens</name>
    <name type="common">Human</name>
    <dbReference type="NCBI Taxonomy" id="9606"/>
</organismHost>
<accession>C1IWT1</accession>
<sequence>MSSGNTKDKHRAYKRKGSPGRDERKRPWQPHHRSRSRSPIRRSGETSSGSYRQEHQISHLSSCTASKISDPVTKTKENTSGKRDSRTNPYTVFSQHKASHPDAPGWCGFYWHSTRIARNGTNAIFNEMKQQFQQLQLDNKIGWDSARELLFSQKKSLDQQYRNMFWHFRNASDCERCNYWDNVYRMHLAHVSSQTESEEITDEEMLSAAESMETDASN</sequence>
<protein>
    <recommendedName>
        <fullName>Non-structural protein NP-1</fullName>
        <shortName>NP1</shortName>
    </recommendedName>
</protein>
<proteinExistence type="inferred from homology"/>
<comment type="function">
    <text evidence="1">Required for the expression of the capsid proteins. Performs the splicing and internal polyadenylation of the viral capsid-encoding mRNA precursor, which allows its maturation and expression. Transactivates the viral promoter.</text>
</comment>
<comment type="subcellular location">
    <subcellularLocation>
        <location evidence="1">Host nucleus</location>
    </subcellularLocation>
</comment>
<comment type="similarity">
    <text evidence="3">Belongs to the Bocaparvovirus Non-structural protein NP-1 family.</text>
</comment>
<gene>
    <name type="primary">NP1</name>
    <name type="synonym">NP-1</name>
</gene>